<organism>
    <name type="scientific">Shewanella putrefaciens (strain CN-32 / ATCC BAA-453)</name>
    <dbReference type="NCBI Taxonomy" id="319224"/>
    <lineage>
        <taxon>Bacteria</taxon>
        <taxon>Pseudomonadati</taxon>
        <taxon>Pseudomonadota</taxon>
        <taxon>Gammaproteobacteria</taxon>
        <taxon>Alteromonadales</taxon>
        <taxon>Shewanellaceae</taxon>
        <taxon>Shewanella</taxon>
    </lineage>
</organism>
<gene>
    <name evidence="1" type="primary">rpoC</name>
    <name type="ordered locus">Sputcn32_3765</name>
</gene>
<name>RPOC_SHEPC</name>
<accession>A4YBY9</accession>
<keyword id="KW-0240">DNA-directed RNA polymerase</keyword>
<keyword id="KW-0460">Magnesium</keyword>
<keyword id="KW-0479">Metal-binding</keyword>
<keyword id="KW-0548">Nucleotidyltransferase</keyword>
<keyword id="KW-0804">Transcription</keyword>
<keyword id="KW-0808">Transferase</keyword>
<keyword id="KW-0862">Zinc</keyword>
<feature type="chain" id="PRO_1000051987" description="DNA-directed RNA polymerase subunit beta'">
    <location>
        <begin position="1"/>
        <end position="1405"/>
    </location>
</feature>
<feature type="binding site" evidence="1">
    <location>
        <position position="70"/>
    </location>
    <ligand>
        <name>Zn(2+)</name>
        <dbReference type="ChEBI" id="CHEBI:29105"/>
        <label>1</label>
    </ligand>
</feature>
<feature type="binding site" evidence="1">
    <location>
        <position position="72"/>
    </location>
    <ligand>
        <name>Zn(2+)</name>
        <dbReference type="ChEBI" id="CHEBI:29105"/>
        <label>1</label>
    </ligand>
</feature>
<feature type="binding site" evidence="1">
    <location>
        <position position="85"/>
    </location>
    <ligand>
        <name>Zn(2+)</name>
        <dbReference type="ChEBI" id="CHEBI:29105"/>
        <label>1</label>
    </ligand>
</feature>
<feature type="binding site" evidence="1">
    <location>
        <position position="88"/>
    </location>
    <ligand>
        <name>Zn(2+)</name>
        <dbReference type="ChEBI" id="CHEBI:29105"/>
        <label>1</label>
    </ligand>
</feature>
<feature type="binding site" evidence="1">
    <location>
        <position position="460"/>
    </location>
    <ligand>
        <name>Mg(2+)</name>
        <dbReference type="ChEBI" id="CHEBI:18420"/>
    </ligand>
</feature>
<feature type="binding site" evidence="1">
    <location>
        <position position="462"/>
    </location>
    <ligand>
        <name>Mg(2+)</name>
        <dbReference type="ChEBI" id="CHEBI:18420"/>
    </ligand>
</feature>
<feature type="binding site" evidence="1">
    <location>
        <position position="464"/>
    </location>
    <ligand>
        <name>Mg(2+)</name>
        <dbReference type="ChEBI" id="CHEBI:18420"/>
    </ligand>
</feature>
<feature type="binding site" evidence="1">
    <location>
        <position position="814"/>
    </location>
    <ligand>
        <name>Zn(2+)</name>
        <dbReference type="ChEBI" id="CHEBI:29105"/>
        <label>2</label>
    </ligand>
</feature>
<feature type="binding site" evidence="1">
    <location>
        <position position="888"/>
    </location>
    <ligand>
        <name>Zn(2+)</name>
        <dbReference type="ChEBI" id="CHEBI:29105"/>
        <label>2</label>
    </ligand>
</feature>
<feature type="binding site" evidence="1">
    <location>
        <position position="895"/>
    </location>
    <ligand>
        <name>Zn(2+)</name>
        <dbReference type="ChEBI" id="CHEBI:29105"/>
        <label>2</label>
    </ligand>
</feature>
<feature type="binding site" evidence="1">
    <location>
        <position position="898"/>
    </location>
    <ligand>
        <name>Zn(2+)</name>
        <dbReference type="ChEBI" id="CHEBI:29105"/>
        <label>2</label>
    </ligand>
</feature>
<protein>
    <recommendedName>
        <fullName evidence="1">DNA-directed RNA polymerase subunit beta'</fullName>
        <shortName evidence="1">RNAP subunit beta'</shortName>
        <ecNumber evidence="1">2.7.7.6</ecNumber>
    </recommendedName>
    <alternativeName>
        <fullName evidence="1">RNA polymerase subunit beta'</fullName>
    </alternativeName>
    <alternativeName>
        <fullName evidence="1">Transcriptase subunit beta'</fullName>
    </alternativeName>
</protein>
<sequence length="1405" mass="155298">MKDLLKFLKQQSKTEEFNGIKIGLASPDLIRSWSFGEVKKPETINYRTFKPEREGLFCARIFGPVKDYECLCGKYKRLKHRGVICEKCGVEVTQTKVRRERMGHIELASPVAHIWFLKSLPSRIGLMLDMTLRDIERVLYFESFVVIEPGMTSLERGQMLTEETYLDALEEYGDEFEAKMGAEAVLELLRAIDLAKEIEQMREELPSINSETRRKKVTKRLKLMEAFFTSGNKPEWMILKVLPVLPPDLRPLVPLDGGRFATSDLNDLYRRVINRNNRLKRLLDLAAPDIIVRNEKRMLQESVDALLDNGRRGRAITGSNKRPLKSLADMIKGKQGRFRQNLLGKRVDYSGRSVITVGPTLRLHQCGLPKKMALELFKPFIYGKLEGRGLATTIKAAKKMVEREVAEVWDVLDEVIREHPVMLNRAPTLHRLGIQAFEPVLIEGKAIQLHPLVCAAYNADFDGDQMAVHVPLTLEAQLEARALMMSTNNILSPANGEPVITPSQDVVLGLYYTSRERINGRGEGMAFMSVAEVEKAYATGAAELHARVKVRITETIIGDDGERTEQRRIVDTTVGRALLSLILPAGLSFDLVNQNMGKKQISKLLNTCYRQLGLKDTVIFADQLMYTGFRFATISGASVGIDDMVIPDEKYTLVADAEAEVLEIQEQFQSGLVTAGERYNKVIDIWASANEKVSKAMMENLSTETVINRDGVEEKQASFNSIYMMADSGARGSAAQIRQLAGMRGLMAKPDGSIIETPITANFREGLNVLQYFISTHGARKGLADTALKTANSGYLTRRLVDVAQDLVVIEDDCGTHEGLTMKPLIEGGDVVEPLRERVLGRVVAVDVFYPGTEDVLAPRNTLLDEAWCDKLEEHSIDEVIVRSVITCDTDFGVCAACYGRDLARGHIINHGEAIGVVAAQSIGEPGTQLTMRTFHIGGAASRASAENNVQVKNSGSLKLHNAKHVTNSDGKLVIVSRSSELAIIDELGREKERYKVPYGTVLEKLEEAAVEAGDIIANWDPHTHPIISEVAGSIKFVDMIDGVTMTRQTDELTGLSSIVILDVGQRGTAGKEMRPMIRLLGANGSDLMIPGTEVPAQYFLPGSAIVNLDDNAQIAVGDALARIPQESSKTRDITGGLPRVADLFEARKPKEPAILAEISGTISFGKETKGKRRLVITPADGGDQYEEMIPKWRNLNVFEGEKVERGEVIADGPEAAHDILRLRGIHNVANYIVNEVQDVYRLQGVKINDKHIEVIIRQMLRKCLITSAGDTEFLEGEQVEVSRVKIANRELIAQGKVPATFERELLGITKASLATESFISAASFQETTRVLTEAAVGGKSDQLRGLKENVIVGRLIPAGTGYAYHKTRNDARAKKDEPVVVNKVTASEAEQNLADLLNMAGSQD</sequence>
<dbReference type="EC" id="2.7.7.6" evidence="1"/>
<dbReference type="EMBL" id="CP000681">
    <property type="protein sequence ID" value="ABP77472.1"/>
    <property type="molecule type" value="Genomic_DNA"/>
</dbReference>
<dbReference type="SMR" id="A4YBY9"/>
<dbReference type="STRING" id="319224.Sputcn32_3765"/>
<dbReference type="KEGG" id="spc:Sputcn32_3765"/>
<dbReference type="eggNOG" id="COG0086">
    <property type="taxonomic scope" value="Bacteria"/>
</dbReference>
<dbReference type="HOGENOM" id="CLU_000524_3_1_6"/>
<dbReference type="GO" id="GO:0000428">
    <property type="term" value="C:DNA-directed RNA polymerase complex"/>
    <property type="evidence" value="ECO:0007669"/>
    <property type="project" value="UniProtKB-KW"/>
</dbReference>
<dbReference type="GO" id="GO:0003677">
    <property type="term" value="F:DNA binding"/>
    <property type="evidence" value="ECO:0007669"/>
    <property type="project" value="UniProtKB-UniRule"/>
</dbReference>
<dbReference type="GO" id="GO:0003899">
    <property type="term" value="F:DNA-directed RNA polymerase activity"/>
    <property type="evidence" value="ECO:0007669"/>
    <property type="project" value="UniProtKB-UniRule"/>
</dbReference>
<dbReference type="GO" id="GO:0000287">
    <property type="term" value="F:magnesium ion binding"/>
    <property type="evidence" value="ECO:0007669"/>
    <property type="project" value="UniProtKB-UniRule"/>
</dbReference>
<dbReference type="GO" id="GO:0008270">
    <property type="term" value="F:zinc ion binding"/>
    <property type="evidence" value="ECO:0007669"/>
    <property type="project" value="UniProtKB-UniRule"/>
</dbReference>
<dbReference type="GO" id="GO:0006351">
    <property type="term" value="P:DNA-templated transcription"/>
    <property type="evidence" value="ECO:0007669"/>
    <property type="project" value="UniProtKB-UniRule"/>
</dbReference>
<dbReference type="CDD" id="cd02655">
    <property type="entry name" value="RNAP_beta'_C"/>
    <property type="match status" value="1"/>
</dbReference>
<dbReference type="CDD" id="cd01609">
    <property type="entry name" value="RNAP_beta'_N"/>
    <property type="match status" value="1"/>
</dbReference>
<dbReference type="FunFam" id="1.10.132.30:FF:000003">
    <property type="entry name" value="DNA-directed RNA polymerase subunit beta"/>
    <property type="match status" value="1"/>
</dbReference>
<dbReference type="FunFam" id="1.10.150.390:FF:000002">
    <property type="entry name" value="DNA-directed RNA polymerase subunit beta"/>
    <property type="match status" value="1"/>
</dbReference>
<dbReference type="FunFam" id="1.10.40.90:FF:000001">
    <property type="entry name" value="DNA-directed RNA polymerase subunit beta"/>
    <property type="match status" value="1"/>
</dbReference>
<dbReference type="FunFam" id="4.10.860.120:FF:000001">
    <property type="entry name" value="DNA-directed RNA polymerase subunit beta"/>
    <property type="match status" value="1"/>
</dbReference>
<dbReference type="Gene3D" id="1.10.132.30">
    <property type="match status" value="1"/>
</dbReference>
<dbReference type="Gene3D" id="1.10.150.390">
    <property type="match status" value="1"/>
</dbReference>
<dbReference type="Gene3D" id="1.10.1790.20">
    <property type="match status" value="1"/>
</dbReference>
<dbReference type="Gene3D" id="1.10.40.90">
    <property type="match status" value="1"/>
</dbReference>
<dbReference type="Gene3D" id="2.40.40.20">
    <property type="match status" value="1"/>
</dbReference>
<dbReference type="Gene3D" id="2.40.50.100">
    <property type="match status" value="3"/>
</dbReference>
<dbReference type="Gene3D" id="4.10.860.120">
    <property type="entry name" value="RNA polymerase II, clamp domain"/>
    <property type="match status" value="1"/>
</dbReference>
<dbReference type="Gene3D" id="1.10.274.100">
    <property type="entry name" value="RNA polymerase Rpb1, domain 3"/>
    <property type="match status" value="1"/>
</dbReference>
<dbReference type="HAMAP" id="MF_01322">
    <property type="entry name" value="RNApol_bact_RpoC"/>
    <property type="match status" value="1"/>
</dbReference>
<dbReference type="InterPro" id="IPR045867">
    <property type="entry name" value="DNA-dir_RpoC_beta_prime"/>
</dbReference>
<dbReference type="InterPro" id="IPR012754">
    <property type="entry name" value="DNA-dir_RpoC_beta_prime_bact"/>
</dbReference>
<dbReference type="InterPro" id="IPR000722">
    <property type="entry name" value="RNA_pol_asu"/>
</dbReference>
<dbReference type="InterPro" id="IPR006592">
    <property type="entry name" value="RNA_pol_N"/>
</dbReference>
<dbReference type="InterPro" id="IPR007080">
    <property type="entry name" value="RNA_pol_Rpb1_1"/>
</dbReference>
<dbReference type="InterPro" id="IPR007066">
    <property type="entry name" value="RNA_pol_Rpb1_3"/>
</dbReference>
<dbReference type="InterPro" id="IPR042102">
    <property type="entry name" value="RNA_pol_Rpb1_3_sf"/>
</dbReference>
<dbReference type="InterPro" id="IPR007083">
    <property type="entry name" value="RNA_pol_Rpb1_4"/>
</dbReference>
<dbReference type="InterPro" id="IPR007081">
    <property type="entry name" value="RNA_pol_Rpb1_5"/>
</dbReference>
<dbReference type="InterPro" id="IPR044893">
    <property type="entry name" value="RNA_pol_Rpb1_clamp_domain"/>
</dbReference>
<dbReference type="InterPro" id="IPR038120">
    <property type="entry name" value="Rpb1_funnel_sf"/>
</dbReference>
<dbReference type="NCBIfam" id="TIGR02386">
    <property type="entry name" value="rpoC_TIGR"/>
    <property type="match status" value="1"/>
</dbReference>
<dbReference type="PANTHER" id="PTHR19376">
    <property type="entry name" value="DNA-DIRECTED RNA POLYMERASE"/>
    <property type="match status" value="1"/>
</dbReference>
<dbReference type="PANTHER" id="PTHR19376:SF54">
    <property type="entry name" value="DNA-DIRECTED RNA POLYMERASE SUBUNIT BETA"/>
    <property type="match status" value="1"/>
</dbReference>
<dbReference type="Pfam" id="PF04997">
    <property type="entry name" value="RNA_pol_Rpb1_1"/>
    <property type="match status" value="1"/>
</dbReference>
<dbReference type="Pfam" id="PF00623">
    <property type="entry name" value="RNA_pol_Rpb1_2"/>
    <property type="match status" value="2"/>
</dbReference>
<dbReference type="Pfam" id="PF04983">
    <property type="entry name" value="RNA_pol_Rpb1_3"/>
    <property type="match status" value="1"/>
</dbReference>
<dbReference type="Pfam" id="PF05000">
    <property type="entry name" value="RNA_pol_Rpb1_4"/>
    <property type="match status" value="1"/>
</dbReference>
<dbReference type="Pfam" id="PF04998">
    <property type="entry name" value="RNA_pol_Rpb1_5"/>
    <property type="match status" value="1"/>
</dbReference>
<dbReference type="SMART" id="SM00663">
    <property type="entry name" value="RPOLA_N"/>
    <property type="match status" value="1"/>
</dbReference>
<dbReference type="SUPFAM" id="SSF64484">
    <property type="entry name" value="beta and beta-prime subunits of DNA dependent RNA-polymerase"/>
    <property type="match status" value="1"/>
</dbReference>
<proteinExistence type="inferred from homology"/>
<comment type="function">
    <text evidence="1">DNA-dependent RNA polymerase catalyzes the transcription of DNA into RNA using the four ribonucleoside triphosphates as substrates.</text>
</comment>
<comment type="catalytic activity">
    <reaction evidence="1">
        <text>RNA(n) + a ribonucleoside 5'-triphosphate = RNA(n+1) + diphosphate</text>
        <dbReference type="Rhea" id="RHEA:21248"/>
        <dbReference type="Rhea" id="RHEA-COMP:14527"/>
        <dbReference type="Rhea" id="RHEA-COMP:17342"/>
        <dbReference type="ChEBI" id="CHEBI:33019"/>
        <dbReference type="ChEBI" id="CHEBI:61557"/>
        <dbReference type="ChEBI" id="CHEBI:140395"/>
        <dbReference type="EC" id="2.7.7.6"/>
    </reaction>
</comment>
<comment type="cofactor">
    <cofactor evidence="1">
        <name>Mg(2+)</name>
        <dbReference type="ChEBI" id="CHEBI:18420"/>
    </cofactor>
    <text evidence="1">Binds 1 Mg(2+) ion per subunit.</text>
</comment>
<comment type="cofactor">
    <cofactor evidence="1">
        <name>Zn(2+)</name>
        <dbReference type="ChEBI" id="CHEBI:29105"/>
    </cofactor>
    <text evidence="1">Binds 2 Zn(2+) ions per subunit.</text>
</comment>
<comment type="subunit">
    <text evidence="1">The RNAP catalytic core consists of 2 alpha, 1 beta, 1 beta' and 1 omega subunit. When a sigma factor is associated with the core the holoenzyme is formed, which can initiate transcription.</text>
</comment>
<comment type="similarity">
    <text evidence="1">Belongs to the RNA polymerase beta' chain family.</text>
</comment>
<reference key="1">
    <citation type="submission" date="2007-04" db="EMBL/GenBank/DDBJ databases">
        <title>Complete sequence of Shewanella putrefaciens CN-32.</title>
        <authorList>
            <consortium name="US DOE Joint Genome Institute"/>
            <person name="Copeland A."/>
            <person name="Lucas S."/>
            <person name="Lapidus A."/>
            <person name="Barry K."/>
            <person name="Detter J.C."/>
            <person name="Glavina del Rio T."/>
            <person name="Hammon N."/>
            <person name="Israni S."/>
            <person name="Dalin E."/>
            <person name="Tice H."/>
            <person name="Pitluck S."/>
            <person name="Chain P."/>
            <person name="Malfatti S."/>
            <person name="Shin M."/>
            <person name="Vergez L."/>
            <person name="Schmutz J."/>
            <person name="Larimer F."/>
            <person name="Land M."/>
            <person name="Hauser L."/>
            <person name="Kyrpides N."/>
            <person name="Mikhailova N."/>
            <person name="Romine M.F."/>
            <person name="Fredrickson J."/>
            <person name="Tiedje J."/>
            <person name="Richardson P."/>
        </authorList>
    </citation>
    <scope>NUCLEOTIDE SEQUENCE [LARGE SCALE GENOMIC DNA]</scope>
    <source>
        <strain>CN-32 / ATCC BAA-453</strain>
    </source>
</reference>
<evidence type="ECO:0000255" key="1">
    <source>
        <dbReference type="HAMAP-Rule" id="MF_01322"/>
    </source>
</evidence>